<comment type="function">
    <text evidence="1">Required for rescue of stalled ribosomes mediated by trans-translation. Binds to transfer-messenger RNA (tmRNA), required for stable association of tmRNA with ribosomes. tmRNA and SmpB together mimic tRNA shape, replacing the anticodon stem-loop with SmpB. tmRNA is encoded by the ssrA gene; the 2 termini fold to resemble tRNA(Ala) and it encodes a 'tag peptide', a short internal open reading frame. During trans-translation Ala-aminoacylated tmRNA acts like a tRNA, entering the A-site of stalled ribosomes, displacing the stalled mRNA. The ribosome then switches to translate the ORF on the tmRNA; the nascent peptide is terminated with the 'tag peptide' encoded by the tmRNA and targeted for degradation. The ribosome is freed to recommence translation, which seems to be the essential function of trans-translation.</text>
</comment>
<comment type="subcellular location">
    <subcellularLocation>
        <location evidence="1">Cytoplasm</location>
    </subcellularLocation>
    <text evidence="1">The tmRNA-SmpB complex associates with stalled 70S ribosomes.</text>
</comment>
<comment type="similarity">
    <text evidence="1">Belongs to the SmpB family.</text>
</comment>
<evidence type="ECO:0000255" key="1">
    <source>
        <dbReference type="HAMAP-Rule" id="MF_00023"/>
    </source>
</evidence>
<evidence type="ECO:0000256" key="2">
    <source>
        <dbReference type="SAM" id="MobiDB-lite"/>
    </source>
</evidence>
<proteinExistence type="inferred from homology"/>
<sequence length="152" mass="17826">MSENILIVHENKKARFDYTIVETYEAGLQLMGSEVKSLRNKDVQLKDSYISFKGDEAYLQNAHIAEYKASSYNNHVPERHRKLLMHRNELDEIFEALREKGYSCVPLKIYFKNGRAKLQIALVKGKKTHDKREAIKKRDVSDQIRSSLRRSR</sequence>
<keyword id="KW-0963">Cytoplasm</keyword>
<keyword id="KW-1185">Reference proteome</keyword>
<keyword id="KW-0694">RNA-binding</keyword>
<accession>Q6MQ46</accession>
<feature type="chain" id="PRO_0000102910" description="SsrA-binding protein">
    <location>
        <begin position="1"/>
        <end position="152"/>
    </location>
</feature>
<feature type="region of interest" description="Disordered" evidence="2">
    <location>
        <begin position="132"/>
        <end position="152"/>
    </location>
</feature>
<feature type="compositionally biased region" description="Basic and acidic residues" evidence="2">
    <location>
        <begin position="132"/>
        <end position="142"/>
    </location>
</feature>
<organism>
    <name type="scientific">Bdellovibrio bacteriovorus (strain ATCC 15356 / DSM 50701 / NCIMB 9529 / HD100)</name>
    <dbReference type="NCBI Taxonomy" id="264462"/>
    <lineage>
        <taxon>Bacteria</taxon>
        <taxon>Pseudomonadati</taxon>
        <taxon>Bdellovibrionota</taxon>
        <taxon>Bdellovibrionia</taxon>
        <taxon>Bdellovibrionales</taxon>
        <taxon>Pseudobdellovibrionaceae</taxon>
        <taxon>Bdellovibrio</taxon>
    </lineage>
</organism>
<name>SSRP_BDEBA</name>
<gene>
    <name evidence="1" type="primary">smpB</name>
    <name type="ordered locus">Bd0638</name>
</gene>
<protein>
    <recommendedName>
        <fullName evidence="1">SsrA-binding protein</fullName>
    </recommendedName>
    <alternativeName>
        <fullName evidence="1">Small protein B</fullName>
    </alternativeName>
</protein>
<reference key="1">
    <citation type="journal article" date="2004" name="Science">
        <title>A predator unmasked: life cycle of Bdellovibrio bacteriovorus from a genomic perspective.</title>
        <authorList>
            <person name="Rendulic S."/>
            <person name="Jagtap P."/>
            <person name="Rosinus A."/>
            <person name="Eppinger M."/>
            <person name="Baar C."/>
            <person name="Lanz C."/>
            <person name="Keller H."/>
            <person name="Lambert C."/>
            <person name="Evans K.J."/>
            <person name="Goesmann A."/>
            <person name="Meyer F."/>
            <person name="Sockett R.E."/>
            <person name="Schuster S.C."/>
        </authorList>
    </citation>
    <scope>NUCLEOTIDE SEQUENCE [LARGE SCALE GENOMIC DNA]</scope>
    <source>
        <strain>ATCC 15356 / DSM 50701 / NCIMB 9529 / HD100</strain>
    </source>
</reference>
<dbReference type="EMBL" id="BX842647">
    <property type="protein sequence ID" value="CAE78601.1"/>
    <property type="molecule type" value="Genomic_DNA"/>
</dbReference>
<dbReference type="RefSeq" id="WP_011163203.1">
    <property type="nucleotide sequence ID" value="NC_005363.1"/>
</dbReference>
<dbReference type="SMR" id="Q6MQ46"/>
<dbReference type="STRING" id="264462.Bd0638"/>
<dbReference type="GeneID" id="93011730"/>
<dbReference type="KEGG" id="bba:Bd0638"/>
<dbReference type="eggNOG" id="COG0691">
    <property type="taxonomic scope" value="Bacteria"/>
</dbReference>
<dbReference type="HOGENOM" id="CLU_108953_0_1_7"/>
<dbReference type="Proteomes" id="UP000008080">
    <property type="component" value="Chromosome"/>
</dbReference>
<dbReference type="GO" id="GO:0005829">
    <property type="term" value="C:cytosol"/>
    <property type="evidence" value="ECO:0007669"/>
    <property type="project" value="TreeGrafter"/>
</dbReference>
<dbReference type="GO" id="GO:0003723">
    <property type="term" value="F:RNA binding"/>
    <property type="evidence" value="ECO:0007669"/>
    <property type="project" value="UniProtKB-UniRule"/>
</dbReference>
<dbReference type="GO" id="GO:0070929">
    <property type="term" value="P:trans-translation"/>
    <property type="evidence" value="ECO:0007669"/>
    <property type="project" value="UniProtKB-UniRule"/>
</dbReference>
<dbReference type="CDD" id="cd09294">
    <property type="entry name" value="SmpB"/>
    <property type="match status" value="1"/>
</dbReference>
<dbReference type="Gene3D" id="2.40.280.10">
    <property type="match status" value="1"/>
</dbReference>
<dbReference type="HAMAP" id="MF_00023">
    <property type="entry name" value="SmpB"/>
    <property type="match status" value="1"/>
</dbReference>
<dbReference type="InterPro" id="IPR023620">
    <property type="entry name" value="SmpB"/>
</dbReference>
<dbReference type="InterPro" id="IPR000037">
    <property type="entry name" value="SsrA-bd_prot"/>
</dbReference>
<dbReference type="InterPro" id="IPR020081">
    <property type="entry name" value="SsrA-bd_prot_CS"/>
</dbReference>
<dbReference type="NCBIfam" id="NF003843">
    <property type="entry name" value="PRK05422.1"/>
    <property type="match status" value="1"/>
</dbReference>
<dbReference type="NCBIfam" id="TIGR00086">
    <property type="entry name" value="smpB"/>
    <property type="match status" value="1"/>
</dbReference>
<dbReference type="PANTHER" id="PTHR30308:SF2">
    <property type="entry name" value="SSRA-BINDING PROTEIN"/>
    <property type="match status" value="1"/>
</dbReference>
<dbReference type="PANTHER" id="PTHR30308">
    <property type="entry name" value="TMRNA-BINDING COMPONENT OF TRANS-TRANSLATION TAGGING COMPLEX"/>
    <property type="match status" value="1"/>
</dbReference>
<dbReference type="Pfam" id="PF01668">
    <property type="entry name" value="SmpB"/>
    <property type="match status" value="1"/>
</dbReference>
<dbReference type="SUPFAM" id="SSF74982">
    <property type="entry name" value="Small protein B (SmpB)"/>
    <property type="match status" value="1"/>
</dbReference>
<dbReference type="PROSITE" id="PS01317">
    <property type="entry name" value="SSRP"/>
    <property type="match status" value="1"/>
</dbReference>